<reference key="1">
    <citation type="journal article" date="2005" name="Nature">
        <title>The genome of the social amoeba Dictyostelium discoideum.</title>
        <authorList>
            <person name="Eichinger L."/>
            <person name="Pachebat J.A."/>
            <person name="Gloeckner G."/>
            <person name="Rajandream M.A."/>
            <person name="Sucgang R."/>
            <person name="Berriman M."/>
            <person name="Song J."/>
            <person name="Olsen R."/>
            <person name="Szafranski K."/>
            <person name="Xu Q."/>
            <person name="Tunggal B."/>
            <person name="Kummerfeld S."/>
            <person name="Madera M."/>
            <person name="Konfortov B.A."/>
            <person name="Rivero F."/>
            <person name="Bankier A.T."/>
            <person name="Lehmann R."/>
            <person name="Hamlin N."/>
            <person name="Davies R."/>
            <person name="Gaudet P."/>
            <person name="Fey P."/>
            <person name="Pilcher K."/>
            <person name="Chen G."/>
            <person name="Saunders D."/>
            <person name="Sodergren E.J."/>
            <person name="Davis P."/>
            <person name="Kerhornou A."/>
            <person name="Nie X."/>
            <person name="Hall N."/>
            <person name="Anjard C."/>
            <person name="Hemphill L."/>
            <person name="Bason N."/>
            <person name="Farbrother P."/>
            <person name="Desany B."/>
            <person name="Just E."/>
            <person name="Morio T."/>
            <person name="Rost R."/>
            <person name="Churcher C.M."/>
            <person name="Cooper J."/>
            <person name="Haydock S."/>
            <person name="van Driessche N."/>
            <person name="Cronin A."/>
            <person name="Goodhead I."/>
            <person name="Muzny D.M."/>
            <person name="Mourier T."/>
            <person name="Pain A."/>
            <person name="Lu M."/>
            <person name="Harper D."/>
            <person name="Lindsay R."/>
            <person name="Hauser H."/>
            <person name="James K.D."/>
            <person name="Quiles M."/>
            <person name="Madan Babu M."/>
            <person name="Saito T."/>
            <person name="Buchrieser C."/>
            <person name="Wardroper A."/>
            <person name="Felder M."/>
            <person name="Thangavelu M."/>
            <person name="Johnson D."/>
            <person name="Knights A."/>
            <person name="Loulseged H."/>
            <person name="Mungall K.L."/>
            <person name="Oliver K."/>
            <person name="Price C."/>
            <person name="Quail M.A."/>
            <person name="Urushihara H."/>
            <person name="Hernandez J."/>
            <person name="Rabbinowitsch E."/>
            <person name="Steffen D."/>
            <person name="Sanders M."/>
            <person name="Ma J."/>
            <person name="Kohara Y."/>
            <person name="Sharp S."/>
            <person name="Simmonds M.N."/>
            <person name="Spiegler S."/>
            <person name="Tivey A."/>
            <person name="Sugano S."/>
            <person name="White B."/>
            <person name="Walker D."/>
            <person name="Woodward J.R."/>
            <person name="Winckler T."/>
            <person name="Tanaka Y."/>
            <person name="Shaulsky G."/>
            <person name="Schleicher M."/>
            <person name="Weinstock G.M."/>
            <person name="Rosenthal A."/>
            <person name="Cox E.C."/>
            <person name="Chisholm R.L."/>
            <person name="Gibbs R.A."/>
            <person name="Loomis W.F."/>
            <person name="Platzer M."/>
            <person name="Kay R.R."/>
            <person name="Williams J.G."/>
            <person name="Dear P.H."/>
            <person name="Noegel A.A."/>
            <person name="Barrell B.G."/>
            <person name="Kuspa A."/>
        </authorList>
    </citation>
    <scope>NUCLEOTIDE SEQUENCE [LARGE SCALE GENOMIC DNA]</scope>
    <source>
        <strain>AX4</strain>
    </source>
</reference>
<keyword id="KW-0240">DNA-directed RNA polymerase</keyword>
<keyword id="KW-0539">Nucleus</keyword>
<keyword id="KW-1185">Reference proteome</keyword>
<keyword id="KW-0804">Transcription</keyword>
<proteinExistence type="inferred from homology"/>
<evidence type="ECO:0000250" key="1"/>
<evidence type="ECO:0000305" key="2"/>
<name>RPC19_DICDI</name>
<sequence length="116" mass="12959">MTLASAPAATESCNSFIPPSFDVNKVEIISDRPDCATFIFTDEDHTLGNALHYVLMKNPKVDFSGYSIPHPSDNRMNLRIQTKSNITAQESLLQGLTDIKDISRHIFETFNNALDQ</sequence>
<comment type="function">
    <text evidence="1">DNA-dependent RNA polymerase catalyzes the transcription of DNA into RNA using the four ribonucleoside triphosphates as substrates. Common core component of RNA polymerases I and III which synthesize ribosomal RNA precursors and small RNAs, such as 5S rRNA and tRNAs, respectively (By similarity).</text>
</comment>
<comment type="subunit">
    <text evidence="1">Component of the RNA polymerase I (Pol I) and RNA polymerase III (Pol III) complexes consisting of 14 and 17 subunits, respectively.</text>
</comment>
<comment type="subcellular location">
    <subcellularLocation>
        <location evidence="1">Nucleus</location>
    </subcellularLocation>
</comment>
<comment type="similarity">
    <text evidence="2">Belongs to the archaeal Rpo11/eukaryotic RPB11/RPC19 RNA polymerase subunit family.</text>
</comment>
<organism>
    <name type="scientific">Dictyostelium discoideum</name>
    <name type="common">Social amoeba</name>
    <dbReference type="NCBI Taxonomy" id="44689"/>
    <lineage>
        <taxon>Eukaryota</taxon>
        <taxon>Amoebozoa</taxon>
        <taxon>Evosea</taxon>
        <taxon>Eumycetozoa</taxon>
        <taxon>Dictyostelia</taxon>
        <taxon>Dictyosteliales</taxon>
        <taxon>Dictyosteliaceae</taxon>
        <taxon>Dictyostelium</taxon>
    </lineage>
</organism>
<gene>
    <name type="primary">rpc19</name>
    <name type="ORF">DDB_G0291362</name>
</gene>
<dbReference type="EMBL" id="AAFI02000177">
    <property type="protein sequence ID" value="EAL61665.1"/>
    <property type="molecule type" value="Genomic_DNA"/>
</dbReference>
<dbReference type="RefSeq" id="XP_635164.1">
    <property type="nucleotide sequence ID" value="XM_630072.1"/>
</dbReference>
<dbReference type="SMR" id="Q54ES6"/>
<dbReference type="FunCoup" id="Q54ES6">
    <property type="interactions" value="232"/>
</dbReference>
<dbReference type="STRING" id="44689.Q54ES6"/>
<dbReference type="PaxDb" id="44689-DDB0216286"/>
<dbReference type="EnsemblProtists" id="EAL61665">
    <property type="protein sequence ID" value="EAL61665"/>
    <property type="gene ID" value="DDB_G0291362"/>
</dbReference>
<dbReference type="GeneID" id="8628110"/>
<dbReference type="KEGG" id="ddi:DDB_G0291362"/>
<dbReference type="dictyBase" id="DDB_G0291362">
    <property type="gene designation" value="rpc19"/>
</dbReference>
<dbReference type="VEuPathDB" id="AmoebaDB:DDB_G0291362"/>
<dbReference type="eggNOG" id="KOG3438">
    <property type="taxonomic scope" value="Eukaryota"/>
</dbReference>
<dbReference type="HOGENOM" id="CLU_090381_3_0_1"/>
<dbReference type="InParanoid" id="Q54ES6"/>
<dbReference type="OMA" id="MRIQMYD"/>
<dbReference type="PhylomeDB" id="Q54ES6"/>
<dbReference type="PRO" id="PR:Q54ES6"/>
<dbReference type="Proteomes" id="UP000002195">
    <property type="component" value="Chromosome 6"/>
</dbReference>
<dbReference type="GO" id="GO:0005736">
    <property type="term" value="C:RNA polymerase I complex"/>
    <property type="evidence" value="ECO:0000250"/>
    <property type="project" value="dictyBase"/>
</dbReference>
<dbReference type="GO" id="GO:0005666">
    <property type="term" value="C:RNA polymerase III complex"/>
    <property type="evidence" value="ECO:0000250"/>
    <property type="project" value="dictyBase"/>
</dbReference>
<dbReference type="GO" id="GO:0003677">
    <property type="term" value="F:DNA binding"/>
    <property type="evidence" value="ECO:0007669"/>
    <property type="project" value="InterPro"/>
</dbReference>
<dbReference type="GO" id="GO:0003899">
    <property type="term" value="F:DNA-directed RNA polymerase activity"/>
    <property type="evidence" value="ECO:0000250"/>
    <property type="project" value="dictyBase"/>
</dbReference>
<dbReference type="GO" id="GO:0046983">
    <property type="term" value="F:protein dimerization activity"/>
    <property type="evidence" value="ECO:0007669"/>
    <property type="project" value="InterPro"/>
</dbReference>
<dbReference type="GO" id="GO:0006360">
    <property type="term" value="P:transcription by RNA polymerase I"/>
    <property type="evidence" value="ECO:0000250"/>
    <property type="project" value="dictyBase"/>
</dbReference>
<dbReference type="GO" id="GO:0006383">
    <property type="term" value="P:transcription by RNA polymerase III"/>
    <property type="evidence" value="ECO:0000250"/>
    <property type="project" value="dictyBase"/>
</dbReference>
<dbReference type="GO" id="GO:0006362">
    <property type="term" value="P:transcription elongation by RNA polymerase I"/>
    <property type="evidence" value="ECO:0000318"/>
    <property type="project" value="GO_Central"/>
</dbReference>
<dbReference type="CDD" id="cd07029">
    <property type="entry name" value="RNAP_I_III_AC19"/>
    <property type="match status" value="1"/>
</dbReference>
<dbReference type="FunFam" id="3.30.1360.10:FF:000018">
    <property type="entry name" value="DNA-directed RNA polymerase I/III subunit, putative"/>
    <property type="match status" value="1"/>
</dbReference>
<dbReference type="Gene3D" id="3.30.1360.10">
    <property type="entry name" value="RNA polymerase, RBP11-like subunit"/>
    <property type="match status" value="1"/>
</dbReference>
<dbReference type="HAMAP" id="MF_00261">
    <property type="entry name" value="RNApol_arch_Rpo11"/>
    <property type="match status" value="1"/>
</dbReference>
<dbReference type="InterPro" id="IPR036603">
    <property type="entry name" value="RBP11-like"/>
</dbReference>
<dbReference type="InterPro" id="IPR009025">
    <property type="entry name" value="RBP11-like_dimer"/>
</dbReference>
<dbReference type="InterPro" id="IPR008193">
    <property type="entry name" value="RNA_pol_Rpb11_13-16kDa_CS"/>
</dbReference>
<dbReference type="InterPro" id="IPR033898">
    <property type="entry name" value="RNAP_AC19"/>
</dbReference>
<dbReference type="InterPro" id="IPR022905">
    <property type="entry name" value="Rpo11-like"/>
</dbReference>
<dbReference type="PANTHER" id="PTHR13946">
    <property type="entry name" value="DNA-DIRECTED RNA POLYMERASE I,II,III"/>
    <property type="match status" value="1"/>
</dbReference>
<dbReference type="PANTHER" id="PTHR13946:SF28">
    <property type="entry name" value="DNA-DIRECTED RNA POLYMERASES I AND III SUBUNIT RPAC2"/>
    <property type="match status" value="1"/>
</dbReference>
<dbReference type="Pfam" id="PF13656">
    <property type="entry name" value="RNA_pol_L_2"/>
    <property type="match status" value="1"/>
</dbReference>
<dbReference type="SUPFAM" id="SSF55257">
    <property type="entry name" value="RBP11-like subunits of RNA polymerase"/>
    <property type="match status" value="1"/>
</dbReference>
<dbReference type="PROSITE" id="PS01154">
    <property type="entry name" value="RNA_POL_L_13KD"/>
    <property type="match status" value="1"/>
</dbReference>
<feature type="chain" id="PRO_0000389019" description="DNA-directed RNA polymerases I and III subunit rpc19">
    <location>
        <begin position="1"/>
        <end position="116"/>
    </location>
</feature>
<accession>Q54ES6</accession>
<protein>
    <recommendedName>
        <fullName>DNA-directed RNA polymerases I and III subunit rpc19</fullName>
    </recommendedName>
</protein>